<gene>
    <name evidence="1" type="primary">dsbD</name>
    <name type="ordered locus">SBO_4319</name>
</gene>
<organism>
    <name type="scientific">Shigella boydii serotype 4 (strain Sb227)</name>
    <dbReference type="NCBI Taxonomy" id="300268"/>
    <lineage>
        <taxon>Bacteria</taxon>
        <taxon>Pseudomonadati</taxon>
        <taxon>Pseudomonadota</taxon>
        <taxon>Gammaproteobacteria</taxon>
        <taxon>Enterobacterales</taxon>
        <taxon>Enterobacteriaceae</taxon>
        <taxon>Shigella</taxon>
    </lineage>
</organism>
<reference key="1">
    <citation type="journal article" date="2005" name="Nucleic Acids Res.">
        <title>Genome dynamics and diversity of Shigella species, the etiologic agents of bacillary dysentery.</title>
        <authorList>
            <person name="Yang F."/>
            <person name="Yang J."/>
            <person name="Zhang X."/>
            <person name="Chen L."/>
            <person name="Jiang Y."/>
            <person name="Yan Y."/>
            <person name="Tang X."/>
            <person name="Wang J."/>
            <person name="Xiong Z."/>
            <person name="Dong J."/>
            <person name="Xue Y."/>
            <person name="Zhu Y."/>
            <person name="Xu X."/>
            <person name="Sun L."/>
            <person name="Chen S."/>
            <person name="Nie H."/>
            <person name="Peng J."/>
            <person name="Xu J."/>
            <person name="Wang Y."/>
            <person name="Yuan Z."/>
            <person name="Wen Y."/>
            <person name="Yao Z."/>
            <person name="Shen Y."/>
            <person name="Qiang B."/>
            <person name="Hou Y."/>
            <person name="Yu J."/>
            <person name="Jin Q."/>
        </authorList>
    </citation>
    <scope>NUCLEOTIDE SEQUENCE [LARGE SCALE GENOMIC DNA]</scope>
    <source>
        <strain>Sb227</strain>
    </source>
</reference>
<proteinExistence type="inferred from homology"/>
<feature type="signal peptide" evidence="1">
    <location>
        <begin position="1"/>
        <end position="19"/>
    </location>
</feature>
<feature type="chain" id="PRO_0000304396" description="Thiol:disulfide interchange protein DsbD">
    <location>
        <begin position="20"/>
        <end position="565"/>
    </location>
</feature>
<feature type="transmembrane region" description="Helical" evidence="1">
    <location>
        <begin position="163"/>
        <end position="183"/>
    </location>
</feature>
<feature type="transmembrane region" description="Helical" evidence="1">
    <location>
        <begin position="208"/>
        <end position="228"/>
    </location>
</feature>
<feature type="transmembrane region" description="Helical" evidence="1">
    <location>
        <begin position="243"/>
        <end position="263"/>
    </location>
</feature>
<feature type="transmembrane region" description="Helical" evidence="1">
    <location>
        <begin position="296"/>
        <end position="316"/>
    </location>
</feature>
<feature type="transmembrane region" description="Helical" evidence="1">
    <location>
        <begin position="323"/>
        <end position="343"/>
    </location>
</feature>
<feature type="transmembrane region" description="Helical" evidence="1">
    <location>
        <begin position="357"/>
        <end position="377"/>
    </location>
</feature>
<feature type="transmembrane region" description="Helical" evidence="1">
    <location>
        <begin position="384"/>
        <end position="404"/>
    </location>
</feature>
<feature type="domain" description="Thioredoxin" evidence="1">
    <location>
        <begin position="434"/>
        <end position="565"/>
    </location>
</feature>
<feature type="disulfide bond" description="Redox-active" evidence="1">
    <location>
        <begin position="122"/>
        <end position="128"/>
    </location>
</feature>
<feature type="disulfide bond" description="Redox-active" evidence="1">
    <location>
        <begin position="182"/>
        <end position="304"/>
    </location>
</feature>
<feature type="disulfide bond" description="Redox-active" evidence="1">
    <location>
        <begin position="480"/>
        <end position="483"/>
    </location>
</feature>
<protein>
    <recommendedName>
        <fullName evidence="1">Thiol:disulfide interchange protein DsbD</fullName>
        <ecNumber evidence="1">1.8.1.8</ecNumber>
    </recommendedName>
    <alternativeName>
        <fullName evidence="1">Protein-disulfide reductase</fullName>
        <shortName evidence="1">Disulfide reductase</shortName>
    </alternativeName>
</protein>
<dbReference type="EC" id="1.8.1.8" evidence="1"/>
<dbReference type="EMBL" id="CP000036">
    <property type="protein sequence ID" value="ABB68736.1"/>
    <property type="molecule type" value="Genomic_DNA"/>
</dbReference>
<dbReference type="RefSeq" id="WP_011379353.1">
    <property type="nucleotide sequence ID" value="NC_007613.1"/>
</dbReference>
<dbReference type="SMR" id="Q31T72"/>
<dbReference type="KEGG" id="sbo:SBO_4319"/>
<dbReference type="HOGENOM" id="CLU_014657_3_0_6"/>
<dbReference type="Proteomes" id="UP000007067">
    <property type="component" value="Chromosome"/>
</dbReference>
<dbReference type="GO" id="GO:0005886">
    <property type="term" value="C:plasma membrane"/>
    <property type="evidence" value="ECO:0007669"/>
    <property type="project" value="UniProtKB-SubCell"/>
</dbReference>
<dbReference type="GO" id="GO:0009055">
    <property type="term" value="F:electron transfer activity"/>
    <property type="evidence" value="ECO:0007669"/>
    <property type="project" value="UniProtKB-UniRule"/>
</dbReference>
<dbReference type="GO" id="GO:0047134">
    <property type="term" value="F:protein-disulfide reductase [NAD(P)H] activity"/>
    <property type="evidence" value="ECO:0007669"/>
    <property type="project" value="UniProtKB-UniRule"/>
</dbReference>
<dbReference type="GO" id="GO:0045454">
    <property type="term" value="P:cell redox homeostasis"/>
    <property type="evidence" value="ECO:0007669"/>
    <property type="project" value="TreeGrafter"/>
</dbReference>
<dbReference type="GO" id="GO:0017004">
    <property type="term" value="P:cytochrome complex assembly"/>
    <property type="evidence" value="ECO:0007669"/>
    <property type="project" value="UniProtKB-UniRule"/>
</dbReference>
<dbReference type="CDD" id="cd02953">
    <property type="entry name" value="DsbDgamma"/>
    <property type="match status" value="1"/>
</dbReference>
<dbReference type="FunFam" id="2.60.40.1250:FF:000001">
    <property type="entry name" value="Thiol:disulfide interchange protein DsbD"/>
    <property type="match status" value="1"/>
</dbReference>
<dbReference type="FunFam" id="3.40.30.10:FF:000116">
    <property type="entry name" value="Thiol:disulfide interchange protein DsbD"/>
    <property type="match status" value="1"/>
</dbReference>
<dbReference type="Gene3D" id="3.40.30.10">
    <property type="entry name" value="Glutaredoxin"/>
    <property type="match status" value="1"/>
</dbReference>
<dbReference type="Gene3D" id="2.60.40.1250">
    <property type="entry name" value="Thiol:disulfide interchange protein DsbD, N-terminal domain"/>
    <property type="match status" value="1"/>
</dbReference>
<dbReference type="HAMAP" id="MF_00399">
    <property type="entry name" value="DbsD"/>
    <property type="match status" value="1"/>
</dbReference>
<dbReference type="InterPro" id="IPR003834">
    <property type="entry name" value="Cyt_c_assmbl_TM_dom"/>
</dbReference>
<dbReference type="InterPro" id="IPR035671">
    <property type="entry name" value="DsbD_gamma"/>
</dbReference>
<dbReference type="InterPro" id="IPR028250">
    <property type="entry name" value="DsbDN"/>
</dbReference>
<dbReference type="InterPro" id="IPR036929">
    <property type="entry name" value="DsbDN_sf"/>
</dbReference>
<dbReference type="InterPro" id="IPR022910">
    <property type="entry name" value="Thiol_diS_interchange_DbsD"/>
</dbReference>
<dbReference type="InterPro" id="IPR012336">
    <property type="entry name" value="Thioredoxin-like_fold"/>
</dbReference>
<dbReference type="InterPro" id="IPR036249">
    <property type="entry name" value="Thioredoxin-like_sf"/>
</dbReference>
<dbReference type="InterPro" id="IPR017937">
    <property type="entry name" value="Thioredoxin_CS"/>
</dbReference>
<dbReference type="InterPro" id="IPR013766">
    <property type="entry name" value="Thioredoxin_domain"/>
</dbReference>
<dbReference type="NCBIfam" id="NF001419">
    <property type="entry name" value="PRK00293.1"/>
    <property type="match status" value="1"/>
</dbReference>
<dbReference type="PANTHER" id="PTHR32234">
    <property type="entry name" value="THIOL:DISULFIDE INTERCHANGE PROTEIN DSBD"/>
    <property type="match status" value="1"/>
</dbReference>
<dbReference type="PANTHER" id="PTHR32234:SF0">
    <property type="entry name" value="THIOL:DISULFIDE INTERCHANGE PROTEIN DSBD"/>
    <property type="match status" value="1"/>
</dbReference>
<dbReference type="Pfam" id="PF11412">
    <property type="entry name" value="DsbD_N"/>
    <property type="match status" value="1"/>
</dbReference>
<dbReference type="Pfam" id="PF02683">
    <property type="entry name" value="DsbD_TM"/>
    <property type="match status" value="1"/>
</dbReference>
<dbReference type="Pfam" id="PF13098">
    <property type="entry name" value="Thioredoxin_2"/>
    <property type="match status" value="1"/>
</dbReference>
<dbReference type="SUPFAM" id="SSF74863">
    <property type="entry name" value="Thiol:disulfide interchange protein DsbD, N-terminal domain (DsbD-alpha)"/>
    <property type="match status" value="1"/>
</dbReference>
<dbReference type="SUPFAM" id="SSF52833">
    <property type="entry name" value="Thioredoxin-like"/>
    <property type="match status" value="1"/>
</dbReference>
<dbReference type="PROSITE" id="PS00194">
    <property type="entry name" value="THIOREDOXIN_1"/>
    <property type="match status" value="1"/>
</dbReference>
<dbReference type="PROSITE" id="PS51352">
    <property type="entry name" value="THIOREDOXIN_2"/>
    <property type="match status" value="1"/>
</dbReference>
<accession>Q31T72</accession>
<comment type="function">
    <text evidence="1">Required to facilitate the formation of correct disulfide bonds in some periplasmic proteins and for the assembly of the periplasmic c-type cytochromes. Acts by transferring electrons from cytoplasmic thioredoxin to the periplasm. This transfer involves a cascade of disulfide bond formation and reduction steps.</text>
</comment>
<comment type="catalytic activity">
    <reaction evidence="1">
        <text>[protein]-dithiol + NAD(+) = [protein]-disulfide + NADH + H(+)</text>
        <dbReference type="Rhea" id="RHEA:18749"/>
        <dbReference type="Rhea" id="RHEA-COMP:10593"/>
        <dbReference type="Rhea" id="RHEA-COMP:10594"/>
        <dbReference type="ChEBI" id="CHEBI:15378"/>
        <dbReference type="ChEBI" id="CHEBI:29950"/>
        <dbReference type="ChEBI" id="CHEBI:50058"/>
        <dbReference type="ChEBI" id="CHEBI:57540"/>
        <dbReference type="ChEBI" id="CHEBI:57945"/>
        <dbReference type="EC" id="1.8.1.8"/>
    </reaction>
</comment>
<comment type="catalytic activity">
    <reaction evidence="1">
        <text>[protein]-dithiol + NADP(+) = [protein]-disulfide + NADPH + H(+)</text>
        <dbReference type="Rhea" id="RHEA:18753"/>
        <dbReference type="Rhea" id="RHEA-COMP:10593"/>
        <dbReference type="Rhea" id="RHEA-COMP:10594"/>
        <dbReference type="ChEBI" id="CHEBI:15378"/>
        <dbReference type="ChEBI" id="CHEBI:29950"/>
        <dbReference type="ChEBI" id="CHEBI:50058"/>
        <dbReference type="ChEBI" id="CHEBI:57783"/>
        <dbReference type="ChEBI" id="CHEBI:58349"/>
        <dbReference type="EC" id="1.8.1.8"/>
    </reaction>
</comment>
<comment type="subcellular location">
    <subcellularLocation>
        <location evidence="1">Cell inner membrane</location>
        <topology evidence="1">Multi-pass membrane protein</topology>
    </subcellularLocation>
</comment>
<comment type="similarity">
    <text evidence="1">Belongs to the thioredoxin family. DsbD subfamily.</text>
</comment>
<keyword id="KW-0997">Cell inner membrane</keyword>
<keyword id="KW-1003">Cell membrane</keyword>
<keyword id="KW-0201">Cytochrome c-type biogenesis</keyword>
<keyword id="KW-1015">Disulfide bond</keyword>
<keyword id="KW-0249">Electron transport</keyword>
<keyword id="KW-0472">Membrane</keyword>
<keyword id="KW-0520">NAD</keyword>
<keyword id="KW-0560">Oxidoreductase</keyword>
<keyword id="KW-0676">Redox-active center</keyword>
<keyword id="KW-0732">Signal</keyword>
<keyword id="KW-0812">Transmembrane</keyword>
<keyword id="KW-1133">Transmembrane helix</keyword>
<keyword id="KW-0813">Transport</keyword>
<evidence type="ECO:0000255" key="1">
    <source>
        <dbReference type="HAMAP-Rule" id="MF_00399"/>
    </source>
</evidence>
<name>DSBD_SHIBS</name>
<sequence length="565" mass="61854">MAQRIFTLILLLCSTSVFAGLFDAPGRSQFVPADQAFAFDFQQNQHDLNLTWQIKDGYYLYRKQIRITPEHAKIADEQLPQGVWHEDEFYGKSEIYRDRLTLPVTINQASAGATLTVTYQGCADAGFCYPPETKTVPLSEVVANNAASQPVSVSQQEQHTAQLPFSALWALLIGIGIAFTPCVLPMYPLISGIVLGGKQRLSTARALLLTFIYVQGMALTYTALGLVVAAAGLQFQAALQHPYVLIGLAIVFTLLAMSMFGLFTLQLPSSLQTRLTLMSNRQQGGSPGGVFVMGAIAGLICSPCTTAPLSAILLYIAQSGNMWLGGGTLYLYALGMGLPLMLITVFGNRLLPKSGPWMEQVKTAFGFVILALPVFLLERVIGDVWGLRLWSALGVAFFGWAFITSLQAKRGWMRVVQIILLAAALVSVRPLQDWAFGATHTAQTQTHLNFTQIKTVDELNHALVEAKGKPVMLDLYADWCVACKEFEKYTFSDPQVQKALADTVLLQANITANDAQDVALLKHLNVLGLPTILFFDGQGQEHPQARVTGFMDAETFSAHLRDRQP</sequence>